<dbReference type="EMBL" id="AE006468">
    <property type="protein sequence ID" value="AAL19175.1"/>
    <property type="molecule type" value="Genomic_DNA"/>
</dbReference>
<dbReference type="RefSeq" id="NP_459216.1">
    <property type="nucleotide sequence ID" value="NC_003197.2"/>
</dbReference>
<dbReference type="RefSeq" id="WP_000272193.1">
    <property type="nucleotide sequence ID" value="NC_003197.2"/>
</dbReference>
<dbReference type="SMR" id="Q7CR64"/>
<dbReference type="STRING" id="99287.STM0211"/>
<dbReference type="PaxDb" id="99287-STM0211"/>
<dbReference type="GeneID" id="1251729"/>
<dbReference type="KEGG" id="stm:STM0211"/>
<dbReference type="PATRIC" id="fig|99287.12.peg.224"/>
<dbReference type="HOGENOM" id="CLU_136774_0_0_6"/>
<dbReference type="OMA" id="QLCQRDQ"/>
<dbReference type="PhylomeDB" id="Q7CR64"/>
<dbReference type="BioCyc" id="SENT99287:STM0211-MONOMER"/>
<dbReference type="Proteomes" id="UP000001014">
    <property type="component" value="Chromosome"/>
</dbReference>
<dbReference type="HAMAP" id="MF_01519">
    <property type="entry name" value="UPF0325"/>
    <property type="match status" value="1"/>
</dbReference>
<dbReference type="InterPro" id="IPR020911">
    <property type="entry name" value="UPF0325"/>
</dbReference>
<dbReference type="NCBIfam" id="NF010213">
    <property type="entry name" value="PRK13677.1"/>
    <property type="match status" value="1"/>
</dbReference>
<dbReference type="Pfam" id="PF11944">
    <property type="entry name" value="DUF3461"/>
    <property type="match status" value="1"/>
</dbReference>
<proteinExistence type="inferred from homology"/>
<reference key="1">
    <citation type="journal article" date="2001" name="Nature">
        <title>Complete genome sequence of Salmonella enterica serovar Typhimurium LT2.</title>
        <authorList>
            <person name="McClelland M."/>
            <person name="Sanderson K.E."/>
            <person name="Spieth J."/>
            <person name="Clifton S.W."/>
            <person name="Latreille P."/>
            <person name="Courtney L."/>
            <person name="Porwollik S."/>
            <person name="Ali J."/>
            <person name="Dante M."/>
            <person name="Du F."/>
            <person name="Hou S."/>
            <person name="Layman D."/>
            <person name="Leonard S."/>
            <person name="Nguyen C."/>
            <person name="Scott K."/>
            <person name="Holmes A."/>
            <person name="Grewal N."/>
            <person name="Mulvaney E."/>
            <person name="Ryan E."/>
            <person name="Sun H."/>
            <person name="Florea L."/>
            <person name="Miller W."/>
            <person name="Stoneking T."/>
            <person name="Nhan M."/>
            <person name="Waterston R."/>
            <person name="Wilson R.K."/>
        </authorList>
    </citation>
    <scope>NUCLEOTIDE SEQUENCE [LARGE SCALE GENOMIC DNA]</scope>
    <source>
        <strain>LT2 / SGSC1412 / ATCC 700720</strain>
    </source>
</reference>
<sequence>MYDNLKSLGITNPEEIDRYSLRQEANNDILKIYFQKDRGEFFAKSVKFKYPRQRKTVVADGIGQGYKEVQEISPNLRYVIDELDQICQRDRSELDLKRKILDDLRHLESVVANKISEIEADLDKLTRK</sequence>
<gene>
    <name evidence="1" type="primary">yaeH</name>
    <name type="ordered locus">STM0211</name>
</gene>
<name>YAEH_SALTY</name>
<protein>
    <recommendedName>
        <fullName evidence="1">UPF0325 protein YaeH</fullName>
    </recommendedName>
</protein>
<keyword id="KW-1185">Reference proteome</keyword>
<comment type="similarity">
    <text evidence="1">Belongs to the UPF0325 family.</text>
</comment>
<evidence type="ECO:0000255" key="1">
    <source>
        <dbReference type="HAMAP-Rule" id="MF_01519"/>
    </source>
</evidence>
<organism>
    <name type="scientific">Salmonella typhimurium (strain LT2 / SGSC1412 / ATCC 700720)</name>
    <dbReference type="NCBI Taxonomy" id="99287"/>
    <lineage>
        <taxon>Bacteria</taxon>
        <taxon>Pseudomonadati</taxon>
        <taxon>Pseudomonadota</taxon>
        <taxon>Gammaproteobacteria</taxon>
        <taxon>Enterobacterales</taxon>
        <taxon>Enterobacteriaceae</taxon>
        <taxon>Salmonella</taxon>
    </lineage>
</organism>
<feature type="chain" id="PRO_0000211844" description="UPF0325 protein YaeH">
    <location>
        <begin position="1"/>
        <end position="128"/>
    </location>
</feature>
<accession>Q7CR64</accession>